<sequence>MRTNPTTSRPGVSTIEEKSTGRIDQIIGPVLDVTFPPGKLPYIYNALVVKSRDTDGKQINVTCEVQQLLGNNRVRAVAMSATDGLMRGMEVIDTGAPLSVPVGGATLGRIFNVLGEPVDNLGPVDTSATFPIHRSAPAFIELDTKLSIFETGIKVVDLLAPYRRGGKIGLFGGAGVGKTVLIMELINNIAKAHGGVSVFGGVGERTREGNDLYMEMKESGVINEKNLEESKVALVYGQMNEPPGARMRVGLTALTMAEYFRDVNKQDVLLFIDNIFRFVQAGSEVSALLGRMPSAVGYQPTLSTEMGSLQERITSTKKGSITSIQAVYVPADDLTDPAPATTFAHLDATTVLSRGLASKGIYPAVDPLDSTSTMLQPRIVGNEHYETAQRVKQTLQRYKELQDIIAILGLDELSEEDRLTVARARKIERFLSQPFFVAEVFTGSPGKYVGLAETIRGFQLILSGELDGLPEQAFYLVGNIDEASTKAINLEEENKLKK</sequence>
<comment type="function">
    <text evidence="1">Produces ATP from ADP in the presence of a proton gradient across the membrane. The catalytic sites are hosted primarily by the beta subunits.</text>
</comment>
<comment type="catalytic activity">
    <reaction evidence="1">
        <text>ATP + H2O + 4 H(+)(in) = ADP + phosphate + 5 H(+)(out)</text>
        <dbReference type="Rhea" id="RHEA:57720"/>
        <dbReference type="ChEBI" id="CHEBI:15377"/>
        <dbReference type="ChEBI" id="CHEBI:15378"/>
        <dbReference type="ChEBI" id="CHEBI:30616"/>
        <dbReference type="ChEBI" id="CHEBI:43474"/>
        <dbReference type="ChEBI" id="CHEBI:456216"/>
        <dbReference type="EC" id="7.1.2.2"/>
    </reaction>
</comment>
<comment type="subunit">
    <text evidence="1">F-type ATPases have 2 components, CF(1) - the catalytic core - and CF(0) - the membrane proton channel. CF(1) has five subunits: alpha(3), beta(3), gamma(1), delta(1), epsilon(1). CF(0) has four main subunits: a(1), b(1), b'(1) and c(9-12).</text>
</comment>
<comment type="subcellular location">
    <subcellularLocation>
        <location evidence="1">Plastid</location>
        <location evidence="1">Chloroplast thylakoid membrane</location>
        <topology evidence="1">Peripheral membrane protein</topology>
    </subcellularLocation>
</comment>
<comment type="similarity">
    <text evidence="1">Belongs to the ATPase alpha/beta chains family.</text>
</comment>
<evidence type="ECO:0000255" key="1">
    <source>
        <dbReference type="HAMAP-Rule" id="MF_01347"/>
    </source>
</evidence>
<geneLocation type="chloroplast"/>
<accession>P0C2Z8</accession>
<protein>
    <recommendedName>
        <fullName evidence="1">ATP synthase subunit beta, chloroplastic</fullName>
        <ecNumber evidence="1">7.1.2.2</ecNumber>
    </recommendedName>
    <alternativeName>
        <fullName evidence="1">ATP synthase F1 sector subunit beta</fullName>
    </alternativeName>
    <alternativeName>
        <fullName evidence="1">F-ATPase subunit beta</fullName>
    </alternativeName>
</protein>
<organism>
    <name type="scientific">Oryza sativa subsp. indica</name>
    <name type="common">Rice</name>
    <dbReference type="NCBI Taxonomy" id="39946"/>
    <lineage>
        <taxon>Eukaryota</taxon>
        <taxon>Viridiplantae</taxon>
        <taxon>Streptophyta</taxon>
        <taxon>Embryophyta</taxon>
        <taxon>Tracheophyta</taxon>
        <taxon>Spermatophyta</taxon>
        <taxon>Magnoliopsida</taxon>
        <taxon>Liliopsida</taxon>
        <taxon>Poales</taxon>
        <taxon>Poaceae</taxon>
        <taxon>BOP clade</taxon>
        <taxon>Oryzoideae</taxon>
        <taxon>Oryzeae</taxon>
        <taxon>Oryzinae</taxon>
        <taxon>Oryza</taxon>
        <taxon>Oryza sativa</taxon>
    </lineage>
</organism>
<gene>
    <name evidence="1" type="primary">atpB</name>
</gene>
<dbReference type="EC" id="7.1.2.2" evidence="1"/>
<dbReference type="EMBL" id="AY522329">
    <property type="status" value="NOT_ANNOTATED_CDS"/>
    <property type="molecule type" value="Genomic_DNA"/>
</dbReference>
<dbReference type="RefSeq" id="YP_009161371.1">
    <property type="nucleotide sequence ID" value="NC_027678.1"/>
</dbReference>
<dbReference type="SMR" id="P0C2Z8"/>
<dbReference type="STRING" id="39946.P0C2Z8"/>
<dbReference type="Proteomes" id="UP000007015">
    <property type="component" value="Chloroplast"/>
</dbReference>
<dbReference type="GO" id="GO:0009535">
    <property type="term" value="C:chloroplast thylakoid membrane"/>
    <property type="evidence" value="ECO:0007669"/>
    <property type="project" value="UniProtKB-SubCell"/>
</dbReference>
<dbReference type="GO" id="GO:0005739">
    <property type="term" value="C:mitochondrion"/>
    <property type="evidence" value="ECO:0007669"/>
    <property type="project" value="GOC"/>
</dbReference>
<dbReference type="GO" id="GO:0009536">
    <property type="term" value="C:plastid"/>
    <property type="evidence" value="ECO:0000305"/>
    <property type="project" value="Gramene"/>
</dbReference>
<dbReference type="GO" id="GO:0045259">
    <property type="term" value="C:proton-transporting ATP synthase complex"/>
    <property type="evidence" value="ECO:0007669"/>
    <property type="project" value="UniProtKB-KW"/>
</dbReference>
<dbReference type="GO" id="GO:0005524">
    <property type="term" value="F:ATP binding"/>
    <property type="evidence" value="ECO:0007669"/>
    <property type="project" value="UniProtKB-UniRule"/>
</dbReference>
<dbReference type="GO" id="GO:0016887">
    <property type="term" value="F:ATP hydrolysis activity"/>
    <property type="evidence" value="ECO:0007669"/>
    <property type="project" value="InterPro"/>
</dbReference>
<dbReference type="GO" id="GO:0046933">
    <property type="term" value="F:proton-transporting ATP synthase activity, rotational mechanism"/>
    <property type="evidence" value="ECO:0007669"/>
    <property type="project" value="UniProtKB-UniRule"/>
</dbReference>
<dbReference type="GO" id="GO:0042776">
    <property type="term" value="P:proton motive force-driven mitochondrial ATP synthesis"/>
    <property type="evidence" value="ECO:0007669"/>
    <property type="project" value="TreeGrafter"/>
</dbReference>
<dbReference type="CDD" id="cd18110">
    <property type="entry name" value="ATP-synt_F1_beta_C"/>
    <property type="match status" value="1"/>
</dbReference>
<dbReference type="CDD" id="cd18115">
    <property type="entry name" value="ATP-synt_F1_beta_N"/>
    <property type="match status" value="1"/>
</dbReference>
<dbReference type="CDD" id="cd01133">
    <property type="entry name" value="F1-ATPase_beta_CD"/>
    <property type="match status" value="1"/>
</dbReference>
<dbReference type="FunFam" id="1.10.1140.10:FF:000001">
    <property type="entry name" value="ATP synthase subunit beta"/>
    <property type="match status" value="1"/>
</dbReference>
<dbReference type="FunFam" id="3.40.50.12240:FF:000006">
    <property type="entry name" value="ATP synthase subunit beta"/>
    <property type="match status" value="1"/>
</dbReference>
<dbReference type="FunFam" id="3.40.50.300:FF:000026">
    <property type="entry name" value="ATP synthase subunit beta"/>
    <property type="match status" value="1"/>
</dbReference>
<dbReference type="FunFam" id="2.40.10.170:FF:000002">
    <property type="entry name" value="ATP synthase subunit beta, chloroplastic"/>
    <property type="match status" value="1"/>
</dbReference>
<dbReference type="Gene3D" id="2.40.10.170">
    <property type="match status" value="1"/>
</dbReference>
<dbReference type="Gene3D" id="1.10.1140.10">
    <property type="entry name" value="Bovine Mitochondrial F1-atpase, Atp Synthase Beta Chain, Chain D, domain 3"/>
    <property type="match status" value="1"/>
</dbReference>
<dbReference type="Gene3D" id="3.40.50.300">
    <property type="entry name" value="P-loop containing nucleotide triphosphate hydrolases"/>
    <property type="match status" value="1"/>
</dbReference>
<dbReference type="HAMAP" id="MF_01347">
    <property type="entry name" value="ATP_synth_beta_bact"/>
    <property type="match status" value="1"/>
</dbReference>
<dbReference type="InterPro" id="IPR003593">
    <property type="entry name" value="AAA+_ATPase"/>
</dbReference>
<dbReference type="InterPro" id="IPR055190">
    <property type="entry name" value="ATP-synt_VA_C"/>
</dbReference>
<dbReference type="InterPro" id="IPR005722">
    <property type="entry name" value="ATP_synth_F1_bsu"/>
</dbReference>
<dbReference type="InterPro" id="IPR020003">
    <property type="entry name" value="ATPase_a/bsu_AS"/>
</dbReference>
<dbReference type="InterPro" id="IPR050053">
    <property type="entry name" value="ATPase_alpha/beta_chains"/>
</dbReference>
<dbReference type="InterPro" id="IPR004100">
    <property type="entry name" value="ATPase_F1/V1/A1_a/bsu_N"/>
</dbReference>
<dbReference type="InterPro" id="IPR036121">
    <property type="entry name" value="ATPase_F1/V1/A1_a/bsu_N_sf"/>
</dbReference>
<dbReference type="InterPro" id="IPR000194">
    <property type="entry name" value="ATPase_F1/V1/A1_a/bsu_nucl-bd"/>
</dbReference>
<dbReference type="InterPro" id="IPR024034">
    <property type="entry name" value="ATPase_F1/V1_b/a_C"/>
</dbReference>
<dbReference type="InterPro" id="IPR027417">
    <property type="entry name" value="P-loop_NTPase"/>
</dbReference>
<dbReference type="NCBIfam" id="TIGR01039">
    <property type="entry name" value="atpD"/>
    <property type="match status" value="1"/>
</dbReference>
<dbReference type="PANTHER" id="PTHR15184">
    <property type="entry name" value="ATP SYNTHASE"/>
    <property type="match status" value="1"/>
</dbReference>
<dbReference type="PANTHER" id="PTHR15184:SF71">
    <property type="entry name" value="ATP SYNTHASE SUBUNIT BETA, MITOCHONDRIAL"/>
    <property type="match status" value="1"/>
</dbReference>
<dbReference type="Pfam" id="PF00006">
    <property type="entry name" value="ATP-synt_ab"/>
    <property type="match status" value="1"/>
</dbReference>
<dbReference type="Pfam" id="PF02874">
    <property type="entry name" value="ATP-synt_ab_N"/>
    <property type="match status" value="1"/>
</dbReference>
<dbReference type="Pfam" id="PF22919">
    <property type="entry name" value="ATP-synt_VA_C"/>
    <property type="match status" value="1"/>
</dbReference>
<dbReference type="SMART" id="SM00382">
    <property type="entry name" value="AAA"/>
    <property type="match status" value="1"/>
</dbReference>
<dbReference type="SUPFAM" id="SSF47917">
    <property type="entry name" value="C-terminal domain of alpha and beta subunits of F1 ATP synthase"/>
    <property type="match status" value="1"/>
</dbReference>
<dbReference type="SUPFAM" id="SSF50615">
    <property type="entry name" value="N-terminal domain of alpha and beta subunits of F1 ATP synthase"/>
    <property type="match status" value="1"/>
</dbReference>
<dbReference type="SUPFAM" id="SSF52540">
    <property type="entry name" value="P-loop containing nucleoside triphosphate hydrolases"/>
    <property type="match status" value="1"/>
</dbReference>
<dbReference type="PROSITE" id="PS00152">
    <property type="entry name" value="ATPASE_ALPHA_BETA"/>
    <property type="match status" value="1"/>
</dbReference>
<name>ATPB_ORYSI</name>
<feature type="chain" id="PRO_0000288523" description="ATP synthase subunit beta, chloroplastic">
    <location>
        <begin position="1"/>
        <end position="498"/>
    </location>
</feature>
<feature type="binding site" evidence="1">
    <location>
        <begin position="172"/>
        <end position="179"/>
    </location>
    <ligand>
        <name>ATP</name>
        <dbReference type="ChEBI" id="CHEBI:30616"/>
    </ligand>
</feature>
<reference key="1">
    <citation type="journal article" date="2004" name="Plant Physiol.">
        <title>A comparison of rice chloroplast genomes.</title>
        <authorList>
            <person name="Tang J."/>
            <person name="Xia H."/>
            <person name="Cao M."/>
            <person name="Zhang X."/>
            <person name="Zeng W."/>
            <person name="Hu S."/>
            <person name="Tong W."/>
            <person name="Wang J."/>
            <person name="Wang J."/>
            <person name="Yu J."/>
            <person name="Yang H."/>
            <person name="Zhu L."/>
        </authorList>
    </citation>
    <scope>NUCLEOTIDE SEQUENCE [LARGE SCALE GENOMIC DNA]</scope>
    <source>
        <strain>cv. 93-11</strain>
    </source>
</reference>
<keyword id="KW-0066">ATP synthesis</keyword>
<keyword id="KW-0067">ATP-binding</keyword>
<keyword id="KW-0139">CF(1)</keyword>
<keyword id="KW-0150">Chloroplast</keyword>
<keyword id="KW-0375">Hydrogen ion transport</keyword>
<keyword id="KW-0406">Ion transport</keyword>
<keyword id="KW-0472">Membrane</keyword>
<keyword id="KW-0547">Nucleotide-binding</keyword>
<keyword id="KW-0934">Plastid</keyword>
<keyword id="KW-1185">Reference proteome</keyword>
<keyword id="KW-0793">Thylakoid</keyword>
<keyword id="KW-1278">Translocase</keyword>
<keyword id="KW-0813">Transport</keyword>
<proteinExistence type="inferred from homology"/>